<sequence>MAKVLYITAHPFNELVSNSMAAGKAFIETYQQHHPDDEVKHIDLFETYIPVIDKDVLTGWGKMSNGETLTDDEQMKVSRLSDILEEFLSADKYVFVTPMWNLSFPPVVKAYIDAISIAGKTFKYSAEGPQGLLTDKKVLHIQSRGGYYTEGPAADFEMGDRYLRTIMTFLGVPSYETIIIEGHNAEPHKTEEIKATSINNAEKLATTF</sequence>
<feature type="chain" id="PRO_0000166354" description="FMN-dependent NADH:quinone oxidoreductase">
    <location>
        <begin position="1"/>
        <end position="208"/>
    </location>
</feature>
<feature type="binding site" evidence="1">
    <location>
        <begin position="17"/>
        <end position="19"/>
    </location>
    <ligand>
        <name>FMN</name>
        <dbReference type="ChEBI" id="CHEBI:58210"/>
    </ligand>
</feature>
<feature type="binding site" evidence="1">
    <location>
        <begin position="99"/>
        <end position="102"/>
    </location>
    <ligand>
        <name>FMN</name>
        <dbReference type="ChEBI" id="CHEBI:58210"/>
    </ligand>
</feature>
<feature type="binding site" evidence="1">
    <location>
        <begin position="143"/>
        <end position="146"/>
    </location>
    <ligand>
        <name>FMN</name>
        <dbReference type="ChEBI" id="CHEBI:58210"/>
    </ligand>
</feature>
<accession>Q932K5</accession>
<proteinExistence type="inferred from homology"/>
<gene>
    <name evidence="1" type="primary">azoR</name>
    <name type="ordered locus">SAV0211</name>
</gene>
<keyword id="KW-0285">Flavoprotein</keyword>
<keyword id="KW-0288">FMN</keyword>
<keyword id="KW-0520">NAD</keyword>
<keyword id="KW-0560">Oxidoreductase</keyword>
<comment type="function">
    <text evidence="1">Quinone reductase that provides resistance to thiol-specific stress caused by electrophilic quinones.</text>
</comment>
<comment type="function">
    <text evidence="1">Also exhibits azoreductase activity. Catalyzes the reductive cleavage of the azo bond in aromatic azo compounds to the corresponding amines.</text>
</comment>
<comment type="catalytic activity">
    <reaction evidence="1">
        <text>2 a quinone + NADH + H(+) = 2 a 1,4-benzosemiquinone + NAD(+)</text>
        <dbReference type="Rhea" id="RHEA:65952"/>
        <dbReference type="ChEBI" id="CHEBI:15378"/>
        <dbReference type="ChEBI" id="CHEBI:57540"/>
        <dbReference type="ChEBI" id="CHEBI:57945"/>
        <dbReference type="ChEBI" id="CHEBI:132124"/>
        <dbReference type="ChEBI" id="CHEBI:134225"/>
    </reaction>
</comment>
<comment type="catalytic activity">
    <reaction evidence="1">
        <text>N,N-dimethyl-1,4-phenylenediamine + anthranilate + 2 NAD(+) = 2-(4-dimethylaminophenyl)diazenylbenzoate + 2 NADH + 2 H(+)</text>
        <dbReference type="Rhea" id="RHEA:55872"/>
        <dbReference type="ChEBI" id="CHEBI:15378"/>
        <dbReference type="ChEBI" id="CHEBI:15783"/>
        <dbReference type="ChEBI" id="CHEBI:16567"/>
        <dbReference type="ChEBI" id="CHEBI:57540"/>
        <dbReference type="ChEBI" id="CHEBI:57945"/>
        <dbReference type="ChEBI" id="CHEBI:71579"/>
        <dbReference type="EC" id="1.7.1.17"/>
    </reaction>
</comment>
<comment type="cofactor">
    <cofactor evidence="1">
        <name>FMN</name>
        <dbReference type="ChEBI" id="CHEBI:58210"/>
    </cofactor>
    <text evidence="1">Binds 1 FMN per subunit.</text>
</comment>
<comment type="subunit">
    <text evidence="1">Homodimer.</text>
</comment>
<comment type="similarity">
    <text evidence="1">Belongs to the azoreductase type 1 family.</text>
</comment>
<protein>
    <recommendedName>
        <fullName evidence="1">FMN-dependent NADH:quinone oxidoreductase</fullName>
        <ecNumber evidence="1">1.6.5.-</ecNumber>
    </recommendedName>
    <alternativeName>
        <fullName evidence="1">Azo-dye reductase</fullName>
    </alternativeName>
    <alternativeName>
        <fullName evidence="1">FMN-dependent NADH-azo compound oxidoreductase</fullName>
    </alternativeName>
    <alternativeName>
        <fullName evidence="1">FMN-dependent NADH-azoreductase</fullName>
        <ecNumber evidence="1">1.7.1.17</ecNumber>
    </alternativeName>
</protein>
<reference key="1">
    <citation type="journal article" date="2001" name="Lancet">
        <title>Whole genome sequencing of meticillin-resistant Staphylococcus aureus.</title>
        <authorList>
            <person name="Kuroda M."/>
            <person name="Ohta T."/>
            <person name="Uchiyama I."/>
            <person name="Baba T."/>
            <person name="Yuzawa H."/>
            <person name="Kobayashi I."/>
            <person name="Cui L."/>
            <person name="Oguchi A."/>
            <person name="Aoki K."/>
            <person name="Nagai Y."/>
            <person name="Lian J.-Q."/>
            <person name="Ito T."/>
            <person name="Kanamori M."/>
            <person name="Matsumaru H."/>
            <person name="Maruyama A."/>
            <person name="Murakami H."/>
            <person name="Hosoyama A."/>
            <person name="Mizutani-Ui Y."/>
            <person name="Takahashi N.K."/>
            <person name="Sawano T."/>
            <person name="Inoue R."/>
            <person name="Kaito C."/>
            <person name="Sekimizu K."/>
            <person name="Hirakawa H."/>
            <person name="Kuhara S."/>
            <person name="Goto S."/>
            <person name="Yabuzaki J."/>
            <person name="Kanehisa M."/>
            <person name="Yamashita A."/>
            <person name="Oshima K."/>
            <person name="Furuya K."/>
            <person name="Yoshino C."/>
            <person name="Shiba T."/>
            <person name="Hattori M."/>
            <person name="Ogasawara N."/>
            <person name="Hayashi H."/>
            <person name="Hiramatsu K."/>
        </authorList>
    </citation>
    <scope>NUCLEOTIDE SEQUENCE [LARGE SCALE GENOMIC DNA]</scope>
    <source>
        <strain>Mu50 / ATCC 700699</strain>
    </source>
</reference>
<organism>
    <name type="scientific">Staphylococcus aureus (strain Mu50 / ATCC 700699)</name>
    <dbReference type="NCBI Taxonomy" id="158878"/>
    <lineage>
        <taxon>Bacteria</taxon>
        <taxon>Bacillati</taxon>
        <taxon>Bacillota</taxon>
        <taxon>Bacilli</taxon>
        <taxon>Bacillales</taxon>
        <taxon>Staphylococcaceae</taxon>
        <taxon>Staphylococcus</taxon>
    </lineage>
</organism>
<dbReference type="EC" id="1.6.5.-" evidence="1"/>
<dbReference type="EC" id="1.7.1.17" evidence="1"/>
<dbReference type="EMBL" id="BA000017">
    <property type="protein sequence ID" value="BAB56373.1"/>
    <property type="molecule type" value="Genomic_DNA"/>
</dbReference>
<dbReference type="RefSeq" id="WP_001151448.1">
    <property type="nucleotide sequence ID" value="NC_002758.2"/>
</dbReference>
<dbReference type="SMR" id="Q932K5"/>
<dbReference type="KEGG" id="sav:SAV0211"/>
<dbReference type="HOGENOM" id="CLU_088964_3_1_9"/>
<dbReference type="PhylomeDB" id="Q932K5"/>
<dbReference type="Proteomes" id="UP000002481">
    <property type="component" value="Chromosome"/>
</dbReference>
<dbReference type="GO" id="GO:0009055">
    <property type="term" value="F:electron transfer activity"/>
    <property type="evidence" value="ECO:0007669"/>
    <property type="project" value="UniProtKB-UniRule"/>
</dbReference>
<dbReference type="GO" id="GO:0010181">
    <property type="term" value="F:FMN binding"/>
    <property type="evidence" value="ECO:0007669"/>
    <property type="project" value="UniProtKB-UniRule"/>
</dbReference>
<dbReference type="GO" id="GO:0016652">
    <property type="term" value="F:oxidoreductase activity, acting on NAD(P)H as acceptor"/>
    <property type="evidence" value="ECO:0007669"/>
    <property type="project" value="UniProtKB-UniRule"/>
</dbReference>
<dbReference type="GO" id="GO:0016655">
    <property type="term" value="F:oxidoreductase activity, acting on NAD(P)H, quinone or similar compound as acceptor"/>
    <property type="evidence" value="ECO:0007669"/>
    <property type="project" value="InterPro"/>
</dbReference>
<dbReference type="Gene3D" id="3.40.50.360">
    <property type="match status" value="1"/>
</dbReference>
<dbReference type="HAMAP" id="MF_01216">
    <property type="entry name" value="Azoreductase_type1"/>
    <property type="match status" value="1"/>
</dbReference>
<dbReference type="InterPro" id="IPR003680">
    <property type="entry name" value="Flavodoxin_fold"/>
</dbReference>
<dbReference type="InterPro" id="IPR029039">
    <property type="entry name" value="Flavoprotein-like_sf"/>
</dbReference>
<dbReference type="InterPro" id="IPR050104">
    <property type="entry name" value="FMN-dep_NADH:Q_OxRdtase_AzoR1"/>
</dbReference>
<dbReference type="InterPro" id="IPR023048">
    <property type="entry name" value="NADH:quinone_OxRdtase_FMN_depd"/>
</dbReference>
<dbReference type="NCBIfam" id="NF010075">
    <property type="entry name" value="PRK13556.1"/>
    <property type="match status" value="1"/>
</dbReference>
<dbReference type="PANTHER" id="PTHR43741">
    <property type="entry name" value="FMN-DEPENDENT NADH-AZOREDUCTASE 1"/>
    <property type="match status" value="1"/>
</dbReference>
<dbReference type="PANTHER" id="PTHR43741:SF7">
    <property type="entry name" value="FMN-DEPENDENT NADH:QUINONE OXIDOREDUCTASE"/>
    <property type="match status" value="1"/>
</dbReference>
<dbReference type="Pfam" id="PF02525">
    <property type="entry name" value="Flavodoxin_2"/>
    <property type="match status" value="1"/>
</dbReference>
<dbReference type="SUPFAM" id="SSF52218">
    <property type="entry name" value="Flavoproteins"/>
    <property type="match status" value="1"/>
</dbReference>
<name>AZOR_STAAM</name>
<evidence type="ECO:0000255" key="1">
    <source>
        <dbReference type="HAMAP-Rule" id="MF_01216"/>
    </source>
</evidence>